<organism>
    <name type="scientific">Shigella dysenteriae serotype 1 (strain Sd197)</name>
    <dbReference type="NCBI Taxonomy" id="300267"/>
    <lineage>
        <taxon>Bacteria</taxon>
        <taxon>Pseudomonadati</taxon>
        <taxon>Pseudomonadota</taxon>
        <taxon>Gammaproteobacteria</taxon>
        <taxon>Enterobacterales</taxon>
        <taxon>Enterobacteriaceae</taxon>
        <taxon>Shigella</taxon>
    </lineage>
</organism>
<reference key="1">
    <citation type="journal article" date="2005" name="Nucleic Acids Res.">
        <title>Genome dynamics and diversity of Shigella species, the etiologic agents of bacillary dysentery.</title>
        <authorList>
            <person name="Yang F."/>
            <person name="Yang J."/>
            <person name="Zhang X."/>
            <person name="Chen L."/>
            <person name="Jiang Y."/>
            <person name="Yan Y."/>
            <person name="Tang X."/>
            <person name="Wang J."/>
            <person name="Xiong Z."/>
            <person name="Dong J."/>
            <person name="Xue Y."/>
            <person name="Zhu Y."/>
            <person name="Xu X."/>
            <person name="Sun L."/>
            <person name="Chen S."/>
            <person name="Nie H."/>
            <person name="Peng J."/>
            <person name="Xu J."/>
            <person name="Wang Y."/>
            <person name="Yuan Z."/>
            <person name="Wen Y."/>
            <person name="Yao Z."/>
            <person name="Shen Y."/>
            <person name="Qiang B."/>
            <person name="Hou Y."/>
            <person name="Yu J."/>
            <person name="Jin Q."/>
        </authorList>
    </citation>
    <scope>NUCLEOTIDE SEQUENCE [LARGE SCALE GENOMIC DNA]</scope>
    <source>
        <strain>Sd197</strain>
    </source>
</reference>
<accession>Q32JN6</accession>
<sequence length="192" mass="20820">MYQDLIRNELNEAAETLANFLKDDANIHAIQRAAVLLADSFKAGGKVLSCGNGGSHCDAMHFAEELTGRYRENRPGYPAIAISDVSHISCVGNDFGFNDIFSRYVEAVGCEGDVLLGISTSGNSANVIKAIAAAREKGMKVITLTGKDGGKMADTADIEIRVPHFGYADRIQEIHIKVIHILIQLIEKEMVK</sequence>
<feature type="chain" id="PRO_1000009097" description="Phosphoheptose isomerase">
    <location>
        <begin position="1"/>
        <end position="192"/>
    </location>
</feature>
<feature type="domain" description="SIS" evidence="1">
    <location>
        <begin position="37"/>
        <end position="192"/>
    </location>
</feature>
<feature type="binding site" evidence="1">
    <location>
        <begin position="52"/>
        <end position="54"/>
    </location>
    <ligand>
        <name>substrate</name>
    </ligand>
</feature>
<feature type="binding site" evidence="1">
    <location>
        <position position="61"/>
    </location>
    <ligand>
        <name>Zn(2+)</name>
        <dbReference type="ChEBI" id="CHEBI:29105"/>
    </ligand>
</feature>
<feature type="binding site" evidence="1">
    <location>
        <position position="65"/>
    </location>
    <ligand>
        <name>substrate</name>
    </ligand>
</feature>
<feature type="binding site" evidence="1">
    <location>
        <position position="65"/>
    </location>
    <ligand>
        <name>Zn(2+)</name>
        <dbReference type="ChEBI" id="CHEBI:29105"/>
    </ligand>
</feature>
<feature type="binding site" evidence="1">
    <location>
        <begin position="93"/>
        <end position="94"/>
    </location>
    <ligand>
        <name>substrate</name>
    </ligand>
</feature>
<feature type="binding site" evidence="1">
    <location>
        <begin position="119"/>
        <end position="121"/>
    </location>
    <ligand>
        <name>substrate</name>
    </ligand>
</feature>
<feature type="binding site" evidence="1">
    <location>
        <position position="124"/>
    </location>
    <ligand>
        <name>substrate</name>
    </ligand>
</feature>
<feature type="binding site" evidence="1">
    <location>
        <position position="172"/>
    </location>
    <ligand>
        <name>substrate</name>
    </ligand>
</feature>
<feature type="binding site" evidence="1">
    <location>
        <position position="172"/>
    </location>
    <ligand>
        <name>Zn(2+)</name>
        <dbReference type="ChEBI" id="CHEBI:29105"/>
    </ligand>
</feature>
<feature type="binding site" evidence="1">
    <location>
        <position position="180"/>
    </location>
    <ligand>
        <name>Zn(2+)</name>
        <dbReference type="ChEBI" id="CHEBI:29105"/>
    </ligand>
</feature>
<protein>
    <recommendedName>
        <fullName evidence="1">Phosphoheptose isomerase</fullName>
        <ecNumber evidence="1">5.3.1.28</ecNumber>
    </recommendedName>
    <alternativeName>
        <fullName evidence="1">Sedoheptulose 7-phosphate isomerase</fullName>
    </alternativeName>
</protein>
<comment type="function">
    <text evidence="1">Catalyzes the isomerization of sedoheptulose 7-phosphate in D-glycero-D-manno-heptose 7-phosphate.</text>
</comment>
<comment type="catalytic activity">
    <reaction evidence="1">
        <text>2 D-sedoheptulose 7-phosphate = D-glycero-alpha-D-manno-heptose 7-phosphate + D-glycero-beta-D-manno-heptose 7-phosphate</text>
        <dbReference type="Rhea" id="RHEA:27489"/>
        <dbReference type="ChEBI" id="CHEBI:57483"/>
        <dbReference type="ChEBI" id="CHEBI:60203"/>
        <dbReference type="ChEBI" id="CHEBI:60204"/>
        <dbReference type="EC" id="5.3.1.28"/>
    </reaction>
</comment>
<comment type="cofactor">
    <cofactor evidence="1">
        <name>Zn(2+)</name>
        <dbReference type="ChEBI" id="CHEBI:29105"/>
    </cofactor>
    <text evidence="1">Binds 1 zinc ion per subunit.</text>
</comment>
<comment type="pathway">
    <text evidence="1">Carbohydrate biosynthesis; D-glycero-D-manno-heptose 7-phosphate biosynthesis; D-glycero-alpha-D-manno-heptose 7-phosphate and D-glycero-beta-D-manno-heptose 7-phosphate from sedoheptulose 7-phosphate: step 1/1.</text>
</comment>
<comment type="subunit">
    <text evidence="1">Homotetramer.</text>
</comment>
<comment type="subcellular location">
    <subcellularLocation>
        <location evidence="1">Cytoplasm</location>
    </subcellularLocation>
</comment>
<comment type="miscellaneous">
    <text evidence="1">The reaction produces a racemic mixture of D-glycero-alpha-D-manno-heptose 7-phosphate and D-glycero-beta-D-manno-heptose 7-phosphate.</text>
</comment>
<comment type="similarity">
    <text evidence="1">Belongs to the SIS family. GmhA subfamily.</text>
</comment>
<proteinExistence type="inferred from homology"/>
<name>GMHA_SHIDS</name>
<dbReference type="EC" id="5.3.1.28" evidence="1"/>
<dbReference type="EMBL" id="CP000034">
    <property type="protein sequence ID" value="ABB60471.1"/>
    <property type="molecule type" value="Genomic_DNA"/>
</dbReference>
<dbReference type="RefSeq" id="WP_011378551.1">
    <property type="nucleotide sequence ID" value="NC_007606.1"/>
</dbReference>
<dbReference type="RefSeq" id="YP_401960.1">
    <property type="nucleotide sequence ID" value="NC_007606.1"/>
</dbReference>
<dbReference type="SMR" id="Q32JN6"/>
<dbReference type="STRING" id="300267.SDY_0248"/>
<dbReference type="EnsemblBacteria" id="ABB60471">
    <property type="protein sequence ID" value="ABB60471"/>
    <property type="gene ID" value="SDY_0248"/>
</dbReference>
<dbReference type="KEGG" id="sdy:SDY_0248"/>
<dbReference type="PATRIC" id="fig|300267.13.peg.279"/>
<dbReference type="HOGENOM" id="CLU_080999_4_0_6"/>
<dbReference type="UniPathway" id="UPA00041">
    <property type="reaction ID" value="UER00436"/>
</dbReference>
<dbReference type="Proteomes" id="UP000002716">
    <property type="component" value="Chromosome"/>
</dbReference>
<dbReference type="GO" id="GO:0005737">
    <property type="term" value="C:cytoplasm"/>
    <property type="evidence" value="ECO:0007669"/>
    <property type="project" value="UniProtKB-SubCell"/>
</dbReference>
<dbReference type="GO" id="GO:0097367">
    <property type="term" value="F:carbohydrate derivative binding"/>
    <property type="evidence" value="ECO:0007669"/>
    <property type="project" value="InterPro"/>
</dbReference>
<dbReference type="GO" id="GO:0008968">
    <property type="term" value="F:D-sedoheptulose 7-phosphate isomerase activity"/>
    <property type="evidence" value="ECO:0007669"/>
    <property type="project" value="UniProtKB-UniRule"/>
</dbReference>
<dbReference type="GO" id="GO:0008270">
    <property type="term" value="F:zinc ion binding"/>
    <property type="evidence" value="ECO:0007669"/>
    <property type="project" value="UniProtKB-UniRule"/>
</dbReference>
<dbReference type="GO" id="GO:0005975">
    <property type="term" value="P:carbohydrate metabolic process"/>
    <property type="evidence" value="ECO:0007669"/>
    <property type="project" value="UniProtKB-UniRule"/>
</dbReference>
<dbReference type="GO" id="GO:2001061">
    <property type="term" value="P:D-glycero-D-manno-heptose 7-phosphate biosynthetic process"/>
    <property type="evidence" value="ECO:0007669"/>
    <property type="project" value="UniProtKB-UniPathway"/>
</dbReference>
<dbReference type="CDD" id="cd05006">
    <property type="entry name" value="SIS_GmhA"/>
    <property type="match status" value="1"/>
</dbReference>
<dbReference type="FunFam" id="3.40.50.10490:FF:000013">
    <property type="entry name" value="Phosphoheptose isomerase"/>
    <property type="match status" value="1"/>
</dbReference>
<dbReference type="Gene3D" id="3.40.50.10490">
    <property type="entry name" value="Glucose-6-phosphate isomerase like protein, domain 1"/>
    <property type="match status" value="1"/>
</dbReference>
<dbReference type="HAMAP" id="MF_00067">
    <property type="entry name" value="GmhA"/>
    <property type="match status" value="1"/>
</dbReference>
<dbReference type="InterPro" id="IPR035461">
    <property type="entry name" value="GmhA/DiaA"/>
</dbReference>
<dbReference type="InterPro" id="IPR004515">
    <property type="entry name" value="Phosphoheptose_Isoase"/>
</dbReference>
<dbReference type="InterPro" id="IPR001347">
    <property type="entry name" value="SIS_dom"/>
</dbReference>
<dbReference type="InterPro" id="IPR046348">
    <property type="entry name" value="SIS_dom_sf"/>
</dbReference>
<dbReference type="InterPro" id="IPR050099">
    <property type="entry name" value="SIS_GmhA/DiaA_subfam"/>
</dbReference>
<dbReference type="NCBIfam" id="TIGR00441">
    <property type="entry name" value="gmhA"/>
    <property type="match status" value="1"/>
</dbReference>
<dbReference type="NCBIfam" id="NF001628">
    <property type="entry name" value="PRK00414.1"/>
    <property type="match status" value="1"/>
</dbReference>
<dbReference type="PANTHER" id="PTHR30390:SF7">
    <property type="entry name" value="PHOSPHOHEPTOSE ISOMERASE"/>
    <property type="match status" value="1"/>
</dbReference>
<dbReference type="PANTHER" id="PTHR30390">
    <property type="entry name" value="SEDOHEPTULOSE 7-PHOSPHATE ISOMERASE / DNAA INITIATOR-ASSOCIATING FACTOR FOR REPLICATION INITIATION"/>
    <property type="match status" value="1"/>
</dbReference>
<dbReference type="Pfam" id="PF13580">
    <property type="entry name" value="SIS_2"/>
    <property type="match status" value="1"/>
</dbReference>
<dbReference type="SUPFAM" id="SSF53697">
    <property type="entry name" value="SIS domain"/>
    <property type="match status" value="1"/>
</dbReference>
<dbReference type="PROSITE" id="PS51464">
    <property type="entry name" value="SIS"/>
    <property type="match status" value="1"/>
</dbReference>
<keyword id="KW-0119">Carbohydrate metabolism</keyword>
<keyword id="KW-0963">Cytoplasm</keyword>
<keyword id="KW-0413">Isomerase</keyword>
<keyword id="KW-0479">Metal-binding</keyword>
<keyword id="KW-1185">Reference proteome</keyword>
<keyword id="KW-0862">Zinc</keyword>
<evidence type="ECO:0000255" key="1">
    <source>
        <dbReference type="HAMAP-Rule" id="MF_00067"/>
    </source>
</evidence>
<gene>
    <name evidence="1" type="primary">gmhA</name>
    <name type="ordered locus">SDY_0248</name>
</gene>